<protein>
    <recommendedName>
        <fullName>Multidrug resistance protein 2</fullName>
    </recommendedName>
    <alternativeName>
        <fullName>Multidrug-efflux transporter 2</fullName>
    </alternativeName>
</protein>
<feature type="chain" id="PRO_0000173318" description="Multidrug resistance protein 2">
    <location>
        <begin position="1"/>
        <end position="400"/>
    </location>
</feature>
<feature type="transmembrane region" description="Helical" evidence="1">
    <location>
        <begin position="11"/>
        <end position="31"/>
    </location>
</feature>
<feature type="transmembrane region" description="Helical" evidence="1">
    <location>
        <begin position="46"/>
        <end position="66"/>
    </location>
</feature>
<feature type="transmembrane region" description="Helical" evidence="1">
    <location>
        <begin position="78"/>
        <end position="98"/>
    </location>
</feature>
<feature type="transmembrane region" description="Helical" evidence="1">
    <location>
        <begin position="106"/>
        <end position="126"/>
    </location>
</feature>
<feature type="transmembrane region" description="Helical" evidence="1">
    <location>
        <begin position="142"/>
        <end position="162"/>
    </location>
</feature>
<feature type="transmembrane region" description="Helical" evidence="1">
    <location>
        <begin position="164"/>
        <end position="184"/>
    </location>
</feature>
<feature type="transmembrane region" description="Helical" evidence="1">
    <location>
        <begin position="213"/>
        <end position="233"/>
    </location>
</feature>
<feature type="transmembrane region" description="Helical" evidence="1">
    <location>
        <begin position="253"/>
        <end position="273"/>
    </location>
</feature>
<feature type="transmembrane region" description="Helical" evidence="1">
    <location>
        <begin position="297"/>
        <end position="317"/>
    </location>
</feature>
<feature type="transmembrane region" description="Helical" evidence="1">
    <location>
        <begin position="346"/>
        <end position="366"/>
    </location>
</feature>
<feature type="transmembrane region" description="Helical" evidence="1">
    <location>
        <begin position="368"/>
        <end position="388"/>
    </location>
</feature>
<comment type="function">
    <text>Energy-dependent efflux pump responsible for decreased drug accumulation in multi-drug-resistant cells. Probably uses a transmembrane proton gradient as the energy source. Causes the efflux of a variety of toxic substances, including such structurally diverse compounds as ethidium bromide, rhodamine and acridine dyes, tetraphenylphosphonium, puromycin, chloramphenicol, doxorubicin, and fluoroquinolone antibiotics.</text>
</comment>
<comment type="subcellular location">
    <subcellularLocation>
        <location>Cell membrane</location>
        <topology>Multi-pass membrane protein</topology>
    </subcellularLocation>
</comment>
<comment type="similarity">
    <text evidence="2">Belongs to the major facilitator superfamily. TCR/Tet family.</text>
</comment>
<organism>
    <name type="scientific">Bacillus subtilis (strain 168)</name>
    <dbReference type="NCBI Taxonomy" id="224308"/>
    <lineage>
        <taxon>Bacteria</taxon>
        <taxon>Bacillati</taxon>
        <taxon>Bacillota</taxon>
        <taxon>Bacilli</taxon>
        <taxon>Bacillales</taxon>
        <taxon>Bacillaceae</taxon>
        <taxon>Bacillus</taxon>
    </lineage>
</organism>
<keyword id="KW-0046">Antibiotic resistance</keyword>
<keyword id="KW-1003">Cell membrane</keyword>
<keyword id="KW-0472">Membrane</keyword>
<keyword id="KW-1185">Reference proteome</keyword>
<keyword id="KW-0812">Transmembrane</keyword>
<keyword id="KW-1133">Transmembrane helix</keyword>
<keyword id="KW-0813">Transport</keyword>
<proteinExistence type="inferred from homology"/>
<name>BMR2_BACSU</name>
<gene>
    <name type="primary">blt</name>
    <name type="synonym">bmr2</name>
    <name type="synonym">bmt</name>
    <name type="ordered locus">BSU26590</name>
</gene>
<reference key="1">
    <citation type="journal article" date="1995" name="J. Bacteriol.">
        <title>Two highly similar multidrug transporters of Bacillus subtilis whose expression is differentially regulated.</title>
        <authorList>
            <person name="Ahmed M."/>
            <person name="Lyass L."/>
            <person name="Markham P.N."/>
            <person name="Taylor S.S."/>
            <person name="Vazquez-Laslop N."/>
            <person name="Neyfakh A.A."/>
        </authorList>
    </citation>
    <scope>NUCLEOTIDE SEQUENCE [GENOMIC DNA]</scope>
    <source>
        <strain>168 / BD170</strain>
    </source>
</reference>
<reference key="2">
    <citation type="journal article" date="1996" name="Microbiology">
        <title>Systematic sequencing of the 283 kb 210 degrees-232 degrees region of the Bacillus subtilis genome containing the skin element and many sporulation genes.</title>
        <authorList>
            <person name="Mizuno M."/>
            <person name="Masuda S."/>
            <person name="Takemaru K."/>
            <person name="Hosono S."/>
            <person name="Sato T."/>
            <person name="Takeuchi M."/>
            <person name="Kobayashi Y."/>
        </authorList>
    </citation>
    <scope>NUCLEOTIDE SEQUENCE [GENOMIC DNA]</scope>
    <source>
        <strain>168 / JH642</strain>
    </source>
</reference>
<reference key="3">
    <citation type="journal article" date="1997" name="Nature">
        <title>The complete genome sequence of the Gram-positive bacterium Bacillus subtilis.</title>
        <authorList>
            <person name="Kunst F."/>
            <person name="Ogasawara N."/>
            <person name="Moszer I."/>
            <person name="Albertini A.M."/>
            <person name="Alloni G."/>
            <person name="Azevedo V."/>
            <person name="Bertero M.G."/>
            <person name="Bessieres P."/>
            <person name="Bolotin A."/>
            <person name="Borchert S."/>
            <person name="Borriss R."/>
            <person name="Boursier L."/>
            <person name="Brans A."/>
            <person name="Braun M."/>
            <person name="Brignell S.C."/>
            <person name="Bron S."/>
            <person name="Brouillet S."/>
            <person name="Bruschi C.V."/>
            <person name="Caldwell B."/>
            <person name="Capuano V."/>
            <person name="Carter N.M."/>
            <person name="Choi S.-K."/>
            <person name="Codani J.-J."/>
            <person name="Connerton I.F."/>
            <person name="Cummings N.J."/>
            <person name="Daniel R.A."/>
            <person name="Denizot F."/>
            <person name="Devine K.M."/>
            <person name="Duesterhoeft A."/>
            <person name="Ehrlich S.D."/>
            <person name="Emmerson P.T."/>
            <person name="Entian K.-D."/>
            <person name="Errington J."/>
            <person name="Fabret C."/>
            <person name="Ferrari E."/>
            <person name="Foulger D."/>
            <person name="Fritz C."/>
            <person name="Fujita M."/>
            <person name="Fujita Y."/>
            <person name="Fuma S."/>
            <person name="Galizzi A."/>
            <person name="Galleron N."/>
            <person name="Ghim S.-Y."/>
            <person name="Glaser P."/>
            <person name="Goffeau A."/>
            <person name="Golightly E.J."/>
            <person name="Grandi G."/>
            <person name="Guiseppi G."/>
            <person name="Guy B.J."/>
            <person name="Haga K."/>
            <person name="Haiech J."/>
            <person name="Harwood C.R."/>
            <person name="Henaut A."/>
            <person name="Hilbert H."/>
            <person name="Holsappel S."/>
            <person name="Hosono S."/>
            <person name="Hullo M.-F."/>
            <person name="Itaya M."/>
            <person name="Jones L.-M."/>
            <person name="Joris B."/>
            <person name="Karamata D."/>
            <person name="Kasahara Y."/>
            <person name="Klaerr-Blanchard M."/>
            <person name="Klein C."/>
            <person name="Kobayashi Y."/>
            <person name="Koetter P."/>
            <person name="Koningstein G."/>
            <person name="Krogh S."/>
            <person name="Kumano M."/>
            <person name="Kurita K."/>
            <person name="Lapidus A."/>
            <person name="Lardinois S."/>
            <person name="Lauber J."/>
            <person name="Lazarevic V."/>
            <person name="Lee S.-M."/>
            <person name="Levine A."/>
            <person name="Liu H."/>
            <person name="Masuda S."/>
            <person name="Mauel C."/>
            <person name="Medigue C."/>
            <person name="Medina N."/>
            <person name="Mellado R.P."/>
            <person name="Mizuno M."/>
            <person name="Moestl D."/>
            <person name="Nakai S."/>
            <person name="Noback M."/>
            <person name="Noone D."/>
            <person name="O'Reilly M."/>
            <person name="Ogawa K."/>
            <person name="Ogiwara A."/>
            <person name="Oudega B."/>
            <person name="Park S.-H."/>
            <person name="Parro V."/>
            <person name="Pohl T.M."/>
            <person name="Portetelle D."/>
            <person name="Porwollik S."/>
            <person name="Prescott A.M."/>
            <person name="Presecan E."/>
            <person name="Pujic P."/>
            <person name="Purnelle B."/>
            <person name="Rapoport G."/>
            <person name="Rey M."/>
            <person name="Reynolds S."/>
            <person name="Rieger M."/>
            <person name="Rivolta C."/>
            <person name="Rocha E."/>
            <person name="Roche B."/>
            <person name="Rose M."/>
            <person name="Sadaie Y."/>
            <person name="Sato T."/>
            <person name="Scanlan E."/>
            <person name="Schleich S."/>
            <person name="Schroeter R."/>
            <person name="Scoffone F."/>
            <person name="Sekiguchi J."/>
            <person name="Sekowska A."/>
            <person name="Seror S.J."/>
            <person name="Serror P."/>
            <person name="Shin B.-S."/>
            <person name="Soldo B."/>
            <person name="Sorokin A."/>
            <person name="Tacconi E."/>
            <person name="Takagi T."/>
            <person name="Takahashi H."/>
            <person name="Takemaru K."/>
            <person name="Takeuchi M."/>
            <person name="Tamakoshi A."/>
            <person name="Tanaka T."/>
            <person name="Terpstra P."/>
            <person name="Tognoni A."/>
            <person name="Tosato V."/>
            <person name="Uchiyama S."/>
            <person name="Vandenbol M."/>
            <person name="Vannier F."/>
            <person name="Vassarotti A."/>
            <person name="Viari A."/>
            <person name="Wambutt R."/>
            <person name="Wedler E."/>
            <person name="Wedler H."/>
            <person name="Weitzenegger T."/>
            <person name="Winters P."/>
            <person name="Wipat A."/>
            <person name="Yamamoto H."/>
            <person name="Yamane K."/>
            <person name="Yasumoto K."/>
            <person name="Yata K."/>
            <person name="Yoshida K."/>
            <person name="Yoshikawa H.-F."/>
            <person name="Zumstein E."/>
            <person name="Yoshikawa H."/>
            <person name="Danchin A."/>
        </authorList>
    </citation>
    <scope>NUCLEOTIDE SEQUENCE [LARGE SCALE GENOMIC DNA]</scope>
    <source>
        <strain>168</strain>
    </source>
</reference>
<accession>P39843</accession>
<evidence type="ECO:0000255" key="1"/>
<evidence type="ECO:0000305" key="2"/>
<dbReference type="EMBL" id="L32599">
    <property type="protein sequence ID" value="AAC36944.1"/>
    <property type="molecule type" value="Genomic_DNA"/>
</dbReference>
<dbReference type="EMBL" id="D84432">
    <property type="protein sequence ID" value="BAA12355.1"/>
    <property type="molecule type" value="Genomic_DNA"/>
</dbReference>
<dbReference type="EMBL" id="AL009126">
    <property type="protein sequence ID" value="CAB14600.1"/>
    <property type="molecule type" value="Genomic_DNA"/>
</dbReference>
<dbReference type="PIR" id="I39792">
    <property type="entry name" value="I39792"/>
</dbReference>
<dbReference type="RefSeq" id="NP_390536.1">
    <property type="nucleotide sequence ID" value="NC_000964.3"/>
</dbReference>
<dbReference type="RefSeq" id="WP_003229880.1">
    <property type="nucleotide sequence ID" value="NZ_OZ025638.1"/>
</dbReference>
<dbReference type="SMR" id="P39843"/>
<dbReference type="FunCoup" id="P39843">
    <property type="interactions" value="499"/>
</dbReference>
<dbReference type="STRING" id="224308.BSU26590"/>
<dbReference type="CARD" id="ARO:3003006">
    <property type="molecule name" value="blt"/>
    <property type="mechanism identifier" value="ARO:0010000"/>
    <property type="mechanism name" value="antibiotic efflux"/>
</dbReference>
<dbReference type="TCDB" id="2.A.1.2.8">
    <property type="family name" value="the major facilitator superfamily (mfs)"/>
</dbReference>
<dbReference type="PaxDb" id="224308-BSU26590"/>
<dbReference type="DNASU" id="937646"/>
<dbReference type="EnsemblBacteria" id="CAB14600">
    <property type="protein sequence ID" value="CAB14600"/>
    <property type="gene ID" value="BSU_26590"/>
</dbReference>
<dbReference type="GeneID" id="937646"/>
<dbReference type="KEGG" id="bsu:BSU26590"/>
<dbReference type="PATRIC" id="fig|224308.179.peg.2889"/>
<dbReference type="eggNOG" id="COG2814">
    <property type="taxonomic scope" value="Bacteria"/>
</dbReference>
<dbReference type="InParanoid" id="P39843"/>
<dbReference type="OrthoDB" id="9793283at2"/>
<dbReference type="PhylomeDB" id="P39843"/>
<dbReference type="BioCyc" id="BSUB:BSU26590-MONOMER"/>
<dbReference type="Proteomes" id="UP000001570">
    <property type="component" value="Chromosome"/>
</dbReference>
<dbReference type="GO" id="GO:0005886">
    <property type="term" value="C:plasma membrane"/>
    <property type="evidence" value="ECO:0007669"/>
    <property type="project" value="UniProtKB-SubCell"/>
</dbReference>
<dbReference type="GO" id="GO:0042910">
    <property type="term" value="F:xenobiotic transmembrane transporter activity"/>
    <property type="evidence" value="ECO:0007669"/>
    <property type="project" value="InterPro"/>
</dbReference>
<dbReference type="GO" id="GO:0046677">
    <property type="term" value="P:response to antibiotic"/>
    <property type="evidence" value="ECO:0007669"/>
    <property type="project" value="UniProtKB-KW"/>
</dbReference>
<dbReference type="CDD" id="cd17325">
    <property type="entry name" value="MFS_MdtG_SLC18_like"/>
    <property type="match status" value="1"/>
</dbReference>
<dbReference type="Gene3D" id="1.20.1250.20">
    <property type="entry name" value="MFS general substrate transporter like domains"/>
    <property type="match status" value="1"/>
</dbReference>
<dbReference type="InterPro" id="IPR011701">
    <property type="entry name" value="MFS"/>
</dbReference>
<dbReference type="InterPro" id="IPR020846">
    <property type="entry name" value="MFS_dom"/>
</dbReference>
<dbReference type="InterPro" id="IPR036259">
    <property type="entry name" value="MFS_trans_sf"/>
</dbReference>
<dbReference type="InterPro" id="IPR004734">
    <property type="entry name" value="Multidrug-R"/>
</dbReference>
<dbReference type="InterPro" id="IPR005829">
    <property type="entry name" value="Sugar_transporter_CS"/>
</dbReference>
<dbReference type="InterPro" id="IPR001958">
    <property type="entry name" value="Tet-R_TetA/multi-R_MdtG-like"/>
</dbReference>
<dbReference type="NCBIfam" id="TIGR00880">
    <property type="entry name" value="2_A_01_02"/>
    <property type="match status" value="1"/>
</dbReference>
<dbReference type="PANTHER" id="PTHR23504">
    <property type="entry name" value="MAJOR FACILITATOR SUPERFAMILY DOMAIN-CONTAINING PROTEIN 10"/>
    <property type="match status" value="1"/>
</dbReference>
<dbReference type="PANTHER" id="PTHR23504:SF115">
    <property type="entry name" value="MULTIDRUG RESISTANCE PROTEIN 2"/>
    <property type="match status" value="1"/>
</dbReference>
<dbReference type="Pfam" id="PF07690">
    <property type="entry name" value="MFS_1"/>
    <property type="match status" value="1"/>
</dbReference>
<dbReference type="PRINTS" id="PR01035">
    <property type="entry name" value="TCRTETA"/>
</dbReference>
<dbReference type="SUPFAM" id="SSF103473">
    <property type="entry name" value="MFS general substrate transporter"/>
    <property type="match status" value="1"/>
</dbReference>
<dbReference type="PROSITE" id="PS50850">
    <property type="entry name" value="MFS"/>
    <property type="match status" value="1"/>
</dbReference>
<dbReference type="PROSITE" id="PS00216">
    <property type="entry name" value="SUGAR_TRANSPORT_1"/>
    <property type="match status" value="1"/>
</dbReference>
<sequence>MKKSINEQKTIFIILLSNIFVAFLGIGLIIPVMPSFMKIMHLSGSTMGYLVAAFAISQLITSPFAGRWVDRFGRKKMIILGLLIFSLSELIFGLGTHVSIFYFSRILGGVSAAFIMPAVTAYVADITTLKERSKAMGYVSAAISTGFIIGPGAGGFIAGFGIRMPFFFASAIALIAAVTSVFILKESLSIEERHQLSSHTKESNFIKDLKRSIHPVYFIAFIIVFVMAFGLSAYETVFSLFSDHKFGFTPKDIAAIITISSIVAVVIQVLLFGKLVNKLGEKRMIQLCLITGAILAFVSTVMSGFLTVLLVTCFIFLAFDLLRPALTAHLSNMAGNQQGFVAGMNSTYTSLGNIFGPALGGILFDLNIHYPFLFAGFVMIVGLGLTMVWKEKKNDAAALN</sequence>